<protein>
    <recommendedName>
        <fullName>Flagellar hook-basal body complex protein FliE</fullName>
    </recommendedName>
</protein>
<gene>
    <name type="primary">fliE</name>
    <name type="ordered locus">BU072</name>
</gene>
<sequence>MFIENINHQNINTKFNLLDAQKKDSENFIDYIKIALGEISKNQNHAKIDSEKFILNQSGISLNDVMINLEKSSISMQLAVQIRNKIVSAYQEIMSQQI</sequence>
<name>FLIE_BUCAI</name>
<accession>P57174</accession>
<comment type="subcellular location">
    <subcellularLocation>
        <location evidence="1">Bacterial flagellum basal body</location>
    </subcellularLocation>
</comment>
<comment type="similarity">
    <text evidence="2">Belongs to the FliE family.</text>
</comment>
<reference key="1">
    <citation type="journal article" date="2000" name="Nature">
        <title>Genome sequence of the endocellular bacterial symbiont of aphids Buchnera sp. APS.</title>
        <authorList>
            <person name="Shigenobu S."/>
            <person name="Watanabe H."/>
            <person name="Hattori M."/>
            <person name="Sakaki Y."/>
            <person name="Ishikawa H."/>
        </authorList>
    </citation>
    <scope>NUCLEOTIDE SEQUENCE [LARGE SCALE GENOMIC DNA]</scope>
    <source>
        <strain>APS</strain>
    </source>
</reference>
<feature type="chain" id="PRO_0000105535" description="Flagellar hook-basal body complex protein FliE">
    <location>
        <begin position="1"/>
        <end position="98"/>
    </location>
</feature>
<proteinExistence type="inferred from homology"/>
<evidence type="ECO:0000250" key="1"/>
<evidence type="ECO:0000305" key="2"/>
<dbReference type="EMBL" id="BA000003">
    <property type="protein sequence ID" value="BAB12792.1"/>
    <property type="molecule type" value="Genomic_DNA"/>
</dbReference>
<dbReference type="RefSeq" id="NP_239906.1">
    <property type="nucleotide sequence ID" value="NC_002528.1"/>
</dbReference>
<dbReference type="RefSeq" id="WP_009874026.1">
    <property type="nucleotide sequence ID" value="NC_002528.1"/>
</dbReference>
<dbReference type="SMR" id="P57174"/>
<dbReference type="STRING" id="563178.BUAP5A_071"/>
<dbReference type="EnsemblBacteria" id="BAB12792">
    <property type="protein sequence ID" value="BAB12792"/>
    <property type="gene ID" value="BAB12792"/>
</dbReference>
<dbReference type="KEGG" id="buc:BU072"/>
<dbReference type="PATRIC" id="fig|107806.10.peg.78"/>
<dbReference type="eggNOG" id="COG1677">
    <property type="taxonomic scope" value="Bacteria"/>
</dbReference>
<dbReference type="HOGENOM" id="CLU_147249_0_2_6"/>
<dbReference type="Proteomes" id="UP000001806">
    <property type="component" value="Chromosome"/>
</dbReference>
<dbReference type="GO" id="GO:0009425">
    <property type="term" value="C:bacterial-type flagellum basal body"/>
    <property type="evidence" value="ECO:0007669"/>
    <property type="project" value="UniProtKB-SubCell"/>
</dbReference>
<dbReference type="GO" id="GO:0003774">
    <property type="term" value="F:cytoskeletal motor activity"/>
    <property type="evidence" value="ECO:0007669"/>
    <property type="project" value="InterPro"/>
</dbReference>
<dbReference type="GO" id="GO:0005198">
    <property type="term" value="F:structural molecule activity"/>
    <property type="evidence" value="ECO:0007669"/>
    <property type="project" value="InterPro"/>
</dbReference>
<dbReference type="GO" id="GO:0071973">
    <property type="term" value="P:bacterial-type flagellum-dependent cell motility"/>
    <property type="evidence" value="ECO:0007669"/>
    <property type="project" value="InterPro"/>
</dbReference>
<dbReference type="HAMAP" id="MF_00724">
    <property type="entry name" value="FliE"/>
    <property type="match status" value="1"/>
</dbReference>
<dbReference type="InterPro" id="IPR001624">
    <property type="entry name" value="FliE"/>
</dbReference>
<dbReference type="NCBIfam" id="TIGR00205">
    <property type="entry name" value="fliE"/>
    <property type="match status" value="1"/>
</dbReference>
<dbReference type="PANTHER" id="PTHR34653">
    <property type="match status" value="1"/>
</dbReference>
<dbReference type="PANTHER" id="PTHR34653:SF1">
    <property type="entry name" value="FLAGELLAR HOOK-BASAL BODY COMPLEX PROTEIN FLIE"/>
    <property type="match status" value="1"/>
</dbReference>
<dbReference type="Pfam" id="PF02049">
    <property type="entry name" value="FliE"/>
    <property type="match status" value="1"/>
</dbReference>
<dbReference type="PRINTS" id="PR01006">
    <property type="entry name" value="FLGHOOKFLIE"/>
</dbReference>
<keyword id="KW-0975">Bacterial flagellum</keyword>
<keyword id="KW-1185">Reference proteome</keyword>
<organism>
    <name type="scientific">Buchnera aphidicola subsp. Acyrthosiphon pisum (strain APS)</name>
    <name type="common">Acyrthosiphon pisum symbiotic bacterium</name>
    <dbReference type="NCBI Taxonomy" id="107806"/>
    <lineage>
        <taxon>Bacteria</taxon>
        <taxon>Pseudomonadati</taxon>
        <taxon>Pseudomonadota</taxon>
        <taxon>Gammaproteobacteria</taxon>
        <taxon>Enterobacterales</taxon>
        <taxon>Erwiniaceae</taxon>
        <taxon>Buchnera</taxon>
    </lineage>
</organism>